<comment type="function">
    <text evidence="9 12">PCNA-binding protein that acts as a regulator of DNA repair during DNA replication. Following DNA damage, the interaction with PCNA is disrupted, facilitating the interaction between monoubiquitinated PCNA and the translesion DNA synthesis DNA polymerase eta (POLH) at stalled replisomes, facilitating the bypass of replication-fork-blocking lesions. Also acts as a regulator of centrosome number.</text>
</comment>
<comment type="subunit">
    <text evidence="4 6 7 8 9 10 12">Interacts (when monoubiquitinated at Lys-15 and Lys-24) with PCNA. Interacts with isoform 2/p33ING1b of ING1. Interacts with BRCA1.</text>
</comment>
<comment type="interaction">
    <interactant intactId="EBI-10971436">
        <id>Q15004</id>
    </interactant>
    <interactant intactId="EBI-358311">
        <id>P12004</id>
        <label>PCNA</label>
    </interactant>
    <organismsDiffer>false</organismsDiffer>
    <experiments>7</experiments>
</comment>
<comment type="interaction">
    <interactant intactId="EBI-10971436">
        <id>Q15004</id>
    </interactant>
    <interactant intactId="EBI-711018">
        <id>P54274-2</id>
        <label>TERF1</label>
    </interactant>
    <organismsDiffer>false</organismsDiffer>
    <experiments>3</experiments>
</comment>
<comment type="subcellular location">
    <subcellularLocation>
        <location evidence="4 6 9 12">Nucleus</location>
    </subcellularLocation>
    <subcellularLocation>
        <location evidence="9">Cytoplasm</location>
        <location evidence="9">Perinuclear region</location>
    </subcellularLocation>
    <text>Following DNA damage, localizes to DNA damage sites (PubMed:21628590). Colocalizes with centrosomes in perinuclear region (PubMed:21673012).</text>
</comment>
<comment type="alternative products">
    <event type="alternative splicing"/>
    <isoform>
        <id>Q15004-1</id>
        <name>1</name>
        <sequence type="displayed"/>
    </isoform>
    <isoform>
        <id>Q15004-2</id>
        <name>2</name>
        <sequence type="described" ref="VSP_045659"/>
    </isoform>
</comment>
<comment type="tissue specificity">
    <text evidence="4 5 11">Expressed predominantly in liver, pancreas and placenta. Not detected in heart or brain. Highly expressed in a number of tumors, especially esophageal tumors, in anaplastic thyroid carcinomas, adrenocortical carcinomas, and in non-small-cell lung cancer lines.</text>
</comment>
<comment type="developmental stage">
    <text>Present only during S and G2 phases of the cell cycle. Peaks at the G2/M phase of the cell cycle and drops rapidly at mitotic exit in an APC/C-dependent manner (at protein level).</text>
</comment>
<comment type="induction">
    <text evidence="6 7">By UV irradiation. By ATF3 in response to UV-stress.</text>
</comment>
<comment type="domain">
    <text evidence="8 12">The PIP-box mediates the interaction with PCNA (PubMed:21628590, PubMed:23000965).</text>
</comment>
<comment type="domain">
    <text evidence="8">The KEN box is required for the association with the APC/C complex.</text>
</comment>
<comment type="domain">
    <text evidence="1">The D-box (destruction box) mediates the interaction with APC/C proteins, and acts as a recognition signal for degradation via the ubiquitin-proteasome pathway.</text>
</comment>
<comment type="domain">
    <text evidence="10">The initiation motif is required for efficient chain initiation by the APC/C complex E2 ligase UBE2C. It determines the rate of substrate's degradation without affecting its affinity for the APC/C, a mechanism used by the APC/C to control the timing of substrate proteolysis during the cell cycle (PubMed:21700221).</text>
</comment>
<comment type="PTM">
    <text evidence="8 10 12">Monoubiquitinated at Lys-15 and Lys-24 during normal S phase, promoting its association with PCNA. Also diubiquitinated at these 2 sites. Following DNA damage, monoubiquitin chains at Lys-15 and Lys-24 are probably extended, leading to disrupt the interaction with PCNA. Polyubiquitinated by the APC/C complex at the mitotic exit, leading to its degradation by the proteasome.</text>
</comment>
<comment type="miscellaneous">
    <text evidence="15">Overexpression in adrenocortical neoplasms (ACC), may promote growth and invasion in adrenal cancer.</text>
</comment>
<comment type="sequence caution" evidence="14">
    <conflict type="erroneous initiation">
        <sequence resource="EMBL-CDS" id="BAA03491"/>
    </conflict>
    <text>Extended N-terminus.</text>
</comment>
<comment type="online information" name="Atlas of Genetics and Cytogenetics in Oncology and Haematology">
    <link uri="https://atlasgeneticsoncology.org/gene/41058/KIAA0101"/>
</comment>
<name>PAF15_HUMAN</name>
<dbReference type="EMBL" id="AF529370">
    <property type="protein sequence ID" value="AAQ09604.1"/>
    <property type="molecule type" value="mRNA"/>
</dbReference>
<dbReference type="EMBL" id="AY598324">
    <property type="protein sequence ID" value="AAT06735.1"/>
    <property type="molecule type" value="mRNA"/>
</dbReference>
<dbReference type="EMBL" id="JN245882">
    <property type="protein sequence ID" value="AEW89488.1"/>
    <property type="molecule type" value="Genomic_DNA"/>
</dbReference>
<dbReference type="EMBL" id="JN245883">
    <property type="protein sequence ID" value="AEW89489.1"/>
    <property type="molecule type" value="Genomic_DNA"/>
</dbReference>
<dbReference type="EMBL" id="JN245884">
    <property type="protein sequence ID" value="AEW89490.1"/>
    <property type="molecule type" value="Genomic_DNA"/>
</dbReference>
<dbReference type="EMBL" id="JN245885">
    <property type="protein sequence ID" value="AEW89491.1"/>
    <property type="molecule type" value="Genomic_DNA"/>
</dbReference>
<dbReference type="EMBL" id="JN245886">
    <property type="protein sequence ID" value="AEW89492.1"/>
    <property type="molecule type" value="Genomic_DNA"/>
</dbReference>
<dbReference type="EMBL" id="JN245889">
    <property type="protein sequence ID" value="AEW89495.1"/>
    <property type="molecule type" value="Genomic_DNA"/>
</dbReference>
<dbReference type="EMBL" id="JN245890">
    <property type="protein sequence ID" value="AEW89496.1"/>
    <property type="molecule type" value="Genomic_DNA"/>
</dbReference>
<dbReference type="EMBL" id="JN245892">
    <property type="protein sequence ID" value="AEW89498.1"/>
    <property type="molecule type" value="Genomic_DNA"/>
</dbReference>
<dbReference type="EMBL" id="JN245893">
    <property type="protein sequence ID" value="AEW89499.1"/>
    <property type="molecule type" value="Genomic_DNA"/>
</dbReference>
<dbReference type="EMBL" id="JN245894">
    <property type="protein sequence ID" value="AEW89500.1"/>
    <property type="molecule type" value="Genomic_DNA"/>
</dbReference>
<dbReference type="EMBL" id="JN245895">
    <property type="protein sequence ID" value="AEW89501.1"/>
    <property type="molecule type" value="Genomic_DNA"/>
</dbReference>
<dbReference type="EMBL" id="JN245896">
    <property type="protein sequence ID" value="AEW89502.1"/>
    <property type="molecule type" value="Genomic_DNA"/>
</dbReference>
<dbReference type="EMBL" id="JN245897">
    <property type="protein sequence ID" value="AEW89503.1"/>
    <property type="molecule type" value="Genomic_DNA"/>
</dbReference>
<dbReference type="EMBL" id="JN245898">
    <property type="protein sequence ID" value="AEW89504.1"/>
    <property type="molecule type" value="Genomic_DNA"/>
</dbReference>
<dbReference type="EMBL" id="JN245899">
    <property type="protein sequence ID" value="AEW89505.1"/>
    <property type="molecule type" value="Genomic_DNA"/>
</dbReference>
<dbReference type="EMBL" id="JN245900">
    <property type="protein sequence ID" value="AEW89506.1"/>
    <property type="molecule type" value="Genomic_DNA"/>
</dbReference>
<dbReference type="EMBL" id="JN245901">
    <property type="protein sequence ID" value="AEW89507.1"/>
    <property type="molecule type" value="Genomic_DNA"/>
</dbReference>
<dbReference type="EMBL" id="JN245902">
    <property type="protein sequence ID" value="AEW89508.1"/>
    <property type="molecule type" value="Genomic_DNA"/>
</dbReference>
<dbReference type="EMBL" id="JN245903">
    <property type="protein sequence ID" value="AEW89509.1"/>
    <property type="molecule type" value="Genomic_DNA"/>
</dbReference>
<dbReference type="EMBL" id="JN245904">
    <property type="protein sequence ID" value="AEW89510.1"/>
    <property type="molecule type" value="Genomic_DNA"/>
</dbReference>
<dbReference type="EMBL" id="JN245906">
    <property type="protein sequence ID" value="AEW89512.1"/>
    <property type="molecule type" value="Genomic_DNA"/>
</dbReference>
<dbReference type="EMBL" id="JN245907">
    <property type="protein sequence ID" value="AEW89513.1"/>
    <property type="molecule type" value="Genomic_DNA"/>
</dbReference>
<dbReference type="EMBL" id="JN245908">
    <property type="protein sequence ID" value="AEW89514.1"/>
    <property type="molecule type" value="Genomic_DNA"/>
</dbReference>
<dbReference type="EMBL" id="JN245910">
    <property type="protein sequence ID" value="AEW89516.1"/>
    <property type="molecule type" value="Genomic_DNA"/>
</dbReference>
<dbReference type="EMBL" id="JN245911">
    <property type="protein sequence ID" value="AEW89517.1"/>
    <property type="molecule type" value="Genomic_DNA"/>
</dbReference>
<dbReference type="EMBL" id="JN245912">
    <property type="protein sequence ID" value="AEW89518.1"/>
    <property type="molecule type" value="Genomic_DNA"/>
</dbReference>
<dbReference type="EMBL" id="JN245936">
    <property type="protein sequence ID" value="AEW89560.1"/>
    <property type="molecule type" value="Genomic_DNA"/>
</dbReference>
<dbReference type="EMBL" id="JN245937">
    <property type="protein sequence ID" value="AEW89561.1"/>
    <property type="molecule type" value="Genomic_DNA"/>
</dbReference>
<dbReference type="EMBL" id="JN245938">
    <property type="protein sequence ID" value="AEW89562.1"/>
    <property type="molecule type" value="Genomic_DNA"/>
</dbReference>
<dbReference type="EMBL" id="JN245939">
    <property type="protein sequence ID" value="AEW89563.1"/>
    <property type="molecule type" value="Genomic_DNA"/>
</dbReference>
<dbReference type="EMBL" id="JN245940">
    <property type="protein sequence ID" value="AEW89564.1"/>
    <property type="molecule type" value="Genomic_DNA"/>
</dbReference>
<dbReference type="EMBL" id="JN245941">
    <property type="protein sequence ID" value="AEW89565.1"/>
    <property type="molecule type" value="Genomic_DNA"/>
</dbReference>
<dbReference type="EMBL" id="JN245942">
    <property type="protein sequence ID" value="AEW89566.1"/>
    <property type="molecule type" value="Genomic_DNA"/>
</dbReference>
<dbReference type="EMBL" id="JN245943">
    <property type="protein sequence ID" value="AEW89567.1"/>
    <property type="molecule type" value="Genomic_DNA"/>
</dbReference>
<dbReference type="EMBL" id="JN245944">
    <property type="protein sequence ID" value="AEW89568.1"/>
    <property type="molecule type" value="Genomic_DNA"/>
</dbReference>
<dbReference type="EMBL" id="JN245945">
    <property type="protein sequence ID" value="AEW89569.1"/>
    <property type="molecule type" value="Genomic_DNA"/>
</dbReference>
<dbReference type="EMBL" id="JN245887">
    <property type="protein sequence ID" value="AEW89493.1"/>
    <property type="molecule type" value="Genomic_DNA"/>
</dbReference>
<dbReference type="EMBL" id="JN245888">
    <property type="protein sequence ID" value="AEW89494.1"/>
    <property type="molecule type" value="Genomic_DNA"/>
</dbReference>
<dbReference type="EMBL" id="JN245891">
    <property type="protein sequence ID" value="AEW89497.1"/>
    <property type="molecule type" value="Genomic_DNA"/>
</dbReference>
<dbReference type="EMBL" id="JN245905">
    <property type="protein sequence ID" value="AEW89511.1"/>
    <property type="molecule type" value="Genomic_DNA"/>
</dbReference>
<dbReference type="EMBL" id="JN245909">
    <property type="protein sequence ID" value="AEW89515.1"/>
    <property type="molecule type" value="Genomic_DNA"/>
</dbReference>
<dbReference type="EMBL" id="JN245913">
    <property type="protein sequence ID" value="AEW89519.1"/>
    <property type="molecule type" value="Genomic_DNA"/>
</dbReference>
<dbReference type="EMBL" id="JN245914">
    <property type="protein sequence ID" value="AEW89520.1"/>
    <property type="molecule type" value="Genomic_DNA"/>
</dbReference>
<dbReference type="EMBL" id="JN245915">
    <property type="protein sequence ID" value="AEW89521.1"/>
    <property type="molecule type" value="Genomic_DNA"/>
</dbReference>
<dbReference type="EMBL" id="JN245916">
    <property type="protein sequence ID" value="AEW89522.1"/>
    <property type="molecule type" value="Genomic_DNA"/>
</dbReference>
<dbReference type="EMBL" id="JN245917">
    <property type="protein sequence ID" value="AEW89523.1"/>
    <property type="molecule type" value="Genomic_DNA"/>
</dbReference>
<dbReference type="EMBL" id="D14657">
    <property type="protein sequence ID" value="BAA03491.2"/>
    <property type="status" value="ALT_INIT"/>
    <property type="molecule type" value="mRNA"/>
</dbReference>
<dbReference type="EMBL" id="AK290748">
    <property type="protein sequence ID" value="BAF83437.1"/>
    <property type="molecule type" value="mRNA"/>
</dbReference>
<dbReference type="EMBL" id="AC087632">
    <property type="status" value="NOT_ANNOTATED_CDS"/>
    <property type="molecule type" value="Genomic_DNA"/>
</dbReference>
<dbReference type="EMBL" id="CH471082">
    <property type="protein sequence ID" value="EAW77679.1"/>
    <property type="molecule type" value="Genomic_DNA"/>
</dbReference>
<dbReference type="EMBL" id="BC005832">
    <property type="protein sequence ID" value="AAH05832.1"/>
    <property type="molecule type" value="mRNA"/>
</dbReference>
<dbReference type="EMBL" id="BC007101">
    <property type="protein sequence ID" value="AAH07101.1"/>
    <property type="molecule type" value="mRNA"/>
</dbReference>
<dbReference type="EMBL" id="BC016782">
    <property type="protein sequence ID" value="AAH16782.1"/>
    <property type="molecule type" value="mRNA"/>
</dbReference>
<dbReference type="EMBL" id="BU170434">
    <property type="status" value="NOT_ANNOTATED_CDS"/>
    <property type="molecule type" value="mRNA"/>
</dbReference>
<dbReference type="CCDS" id="CCDS10193.1">
    <molecule id="Q15004-1"/>
</dbReference>
<dbReference type="CCDS" id="CCDS32269.1">
    <molecule id="Q15004-2"/>
</dbReference>
<dbReference type="RefSeq" id="NP_001025160.1">
    <molecule id="Q15004-2"/>
    <property type="nucleotide sequence ID" value="NM_001029989.3"/>
</dbReference>
<dbReference type="RefSeq" id="NP_055551.1">
    <molecule id="Q15004-1"/>
    <property type="nucleotide sequence ID" value="NM_014736.6"/>
</dbReference>
<dbReference type="PDB" id="4D2G">
    <property type="method" value="X-ray"/>
    <property type="resolution" value="2.65 A"/>
    <property type="chains" value="D/E=52-69"/>
</dbReference>
<dbReference type="PDB" id="6EHT">
    <property type="method" value="X-ray"/>
    <property type="resolution" value="3.20 A"/>
    <property type="chains" value="D/E=52-71"/>
</dbReference>
<dbReference type="PDB" id="6GWS">
    <property type="method" value="X-ray"/>
    <property type="resolution" value="2.90 A"/>
    <property type="chains" value="D/E/F=41-72"/>
</dbReference>
<dbReference type="PDB" id="6IIW">
    <property type="method" value="X-ray"/>
    <property type="resolution" value="1.70 A"/>
    <property type="chains" value="B=2-11"/>
</dbReference>
<dbReference type="PDBsum" id="4D2G"/>
<dbReference type="PDBsum" id="6EHT"/>
<dbReference type="PDBsum" id="6GWS"/>
<dbReference type="PDBsum" id="6IIW"/>
<dbReference type="BMRB" id="Q15004"/>
<dbReference type="SMR" id="Q15004"/>
<dbReference type="BioGRID" id="115114">
    <property type="interactions" value="82"/>
</dbReference>
<dbReference type="CORUM" id="Q15004"/>
<dbReference type="FunCoup" id="Q15004">
    <property type="interactions" value="1874"/>
</dbReference>
<dbReference type="IntAct" id="Q15004">
    <property type="interactions" value="7"/>
</dbReference>
<dbReference type="STRING" id="9606.ENSP00000300035"/>
<dbReference type="BindingDB" id="Q15004"/>
<dbReference type="ChEMBL" id="CHEMBL5574"/>
<dbReference type="GlyGen" id="Q15004">
    <property type="glycosylation" value="1 site, 1 N-linked glycan (1 site)"/>
</dbReference>
<dbReference type="iPTMnet" id="Q15004"/>
<dbReference type="PhosphoSitePlus" id="Q15004"/>
<dbReference type="BioMuta" id="PCLAF"/>
<dbReference type="jPOST" id="Q15004"/>
<dbReference type="MassIVE" id="Q15004"/>
<dbReference type="PaxDb" id="9606-ENSP00000300035"/>
<dbReference type="PeptideAtlas" id="Q15004"/>
<dbReference type="ProteomicsDB" id="1637"/>
<dbReference type="Pumba" id="Q15004"/>
<dbReference type="Antibodypedia" id="25814">
    <property type="antibodies" value="222 antibodies from 26 providers"/>
</dbReference>
<dbReference type="DNASU" id="9768"/>
<dbReference type="Ensembl" id="ENST00000300035.9">
    <molecule id="Q15004-1"/>
    <property type="protein sequence ID" value="ENSP00000300035.4"/>
    <property type="gene ID" value="ENSG00000166803.14"/>
</dbReference>
<dbReference type="Ensembl" id="ENST00000380258.6">
    <molecule id="Q15004-2"/>
    <property type="protein sequence ID" value="ENSP00000369608.2"/>
    <property type="gene ID" value="ENSG00000166803.14"/>
</dbReference>
<dbReference type="GeneID" id="9768"/>
<dbReference type="KEGG" id="hsa:9768"/>
<dbReference type="MANE-Select" id="ENST00000300035.9">
    <property type="protein sequence ID" value="ENSP00000300035.4"/>
    <property type="RefSeq nucleotide sequence ID" value="NM_014736.6"/>
    <property type="RefSeq protein sequence ID" value="NP_055551.1"/>
</dbReference>
<dbReference type="UCSC" id="uc002ank.5">
    <molecule id="Q15004-1"/>
    <property type="organism name" value="human"/>
</dbReference>
<dbReference type="AGR" id="HGNC:28961"/>
<dbReference type="CTD" id="9768"/>
<dbReference type="DisGeNET" id="9768"/>
<dbReference type="GeneCards" id="PCLAF"/>
<dbReference type="HGNC" id="HGNC:28961">
    <property type="gene designation" value="PCLAF"/>
</dbReference>
<dbReference type="HPA" id="ENSG00000166803">
    <property type="expression patterns" value="Group enriched (bone marrow, lymphoid tissue)"/>
</dbReference>
<dbReference type="MalaCards" id="PCLAF"/>
<dbReference type="MIM" id="610696">
    <property type="type" value="gene"/>
</dbReference>
<dbReference type="neXtProt" id="NX_Q15004"/>
<dbReference type="OpenTargets" id="ENSG00000166803"/>
<dbReference type="OpenTargets" id="ENSG00000259316"/>
<dbReference type="PharmGKB" id="PA134974023"/>
<dbReference type="VEuPathDB" id="HostDB:ENSG00000166803"/>
<dbReference type="eggNOG" id="ENOG502S3UM">
    <property type="taxonomic scope" value="Eukaryota"/>
</dbReference>
<dbReference type="GeneTree" id="ENSGT00510000048252"/>
<dbReference type="HOGENOM" id="CLU_142343_0_0_1"/>
<dbReference type="InParanoid" id="Q15004"/>
<dbReference type="OMA" id="QPDHTDE"/>
<dbReference type="OrthoDB" id="7479084at2759"/>
<dbReference type="PAN-GO" id="Q15004">
    <property type="GO annotations" value="3 GO annotations based on evolutionary models"/>
</dbReference>
<dbReference type="PhylomeDB" id="Q15004"/>
<dbReference type="TreeFam" id="TF333199"/>
<dbReference type="PathwayCommons" id="Q15004"/>
<dbReference type="Reactome" id="R-HSA-5656169">
    <property type="pathway name" value="Termination of translesion DNA synthesis"/>
</dbReference>
<dbReference type="SignaLink" id="Q15004"/>
<dbReference type="SIGNOR" id="Q15004"/>
<dbReference type="BioGRID-ORCS" id="9768">
    <property type="hits" value="15 hits in 1158 CRISPR screens"/>
</dbReference>
<dbReference type="CD-CODE" id="8C2F96ED">
    <property type="entry name" value="Centrosome"/>
</dbReference>
<dbReference type="CD-CODE" id="DEE660B4">
    <property type="entry name" value="Stress granule"/>
</dbReference>
<dbReference type="ChiTaRS" id="KIAA0101">
    <property type="organism name" value="human"/>
</dbReference>
<dbReference type="EvolutionaryTrace" id="Q15004"/>
<dbReference type="GeneWiki" id="KIAA0101"/>
<dbReference type="GenomeRNAi" id="9768"/>
<dbReference type="Pharos" id="Q15004">
    <property type="development level" value="Tbio"/>
</dbReference>
<dbReference type="PRO" id="PR:Q15004"/>
<dbReference type="Proteomes" id="UP000005640">
    <property type="component" value="Chromosome 15"/>
</dbReference>
<dbReference type="RNAct" id="Q15004">
    <property type="molecule type" value="protein"/>
</dbReference>
<dbReference type="Bgee" id="ENSG00000166803">
    <property type="expression patterns" value="Expressed in endometrium epithelium and 193 other cell types or tissues"/>
</dbReference>
<dbReference type="ExpressionAtlas" id="Q15004">
    <property type="expression patterns" value="baseline and differential"/>
</dbReference>
<dbReference type="GO" id="GO:0005813">
    <property type="term" value="C:centrosome"/>
    <property type="evidence" value="ECO:0000314"/>
    <property type="project" value="HPA"/>
</dbReference>
<dbReference type="GO" id="GO:0005654">
    <property type="term" value="C:nucleoplasm"/>
    <property type="evidence" value="ECO:0000304"/>
    <property type="project" value="Reactome"/>
</dbReference>
<dbReference type="GO" id="GO:0005634">
    <property type="term" value="C:nucleus"/>
    <property type="evidence" value="ECO:0000314"/>
    <property type="project" value="UniProtKB"/>
</dbReference>
<dbReference type="GO" id="GO:0048471">
    <property type="term" value="C:perinuclear region of cytoplasm"/>
    <property type="evidence" value="ECO:0000314"/>
    <property type="project" value="UniProtKB"/>
</dbReference>
<dbReference type="GO" id="GO:0003682">
    <property type="term" value="F:chromatin binding"/>
    <property type="evidence" value="ECO:0000314"/>
    <property type="project" value="UniProtKB"/>
</dbReference>
<dbReference type="GO" id="GO:0060090">
    <property type="term" value="F:molecular adaptor activity"/>
    <property type="evidence" value="ECO:0000314"/>
    <property type="project" value="DisProt"/>
</dbReference>
<dbReference type="GO" id="GO:0007098">
    <property type="term" value="P:centrosome cycle"/>
    <property type="evidence" value="ECO:0000315"/>
    <property type="project" value="UniProtKB"/>
</dbReference>
<dbReference type="GO" id="GO:0006974">
    <property type="term" value="P:DNA damage response"/>
    <property type="evidence" value="ECO:0000314"/>
    <property type="project" value="UniProtKB"/>
</dbReference>
<dbReference type="GO" id="GO:0006260">
    <property type="term" value="P:DNA replication"/>
    <property type="evidence" value="ECO:0000314"/>
    <property type="project" value="UniProtKB"/>
</dbReference>
<dbReference type="GO" id="GO:0051726">
    <property type="term" value="P:regulation of cell cycle"/>
    <property type="evidence" value="ECO:0000315"/>
    <property type="project" value="UniProtKB"/>
</dbReference>
<dbReference type="GO" id="GO:0009411">
    <property type="term" value="P:response to UV"/>
    <property type="evidence" value="ECO:0000314"/>
    <property type="project" value="UniProtKB"/>
</dbReference>
<dbReference type="GO" id="GO:0019985">
    <property type="term" value="P:translesion synthesis"/>
    <property type="evidence" value="ECO:0000315"/>
    <property type="project" value="UniProtKB"/>
</dbReference>
<dbReference type="DisProt" id="DP01425"/>
<dbReference type="InterPro" id="IPR040444">
    <property type="entry name" value="PCNA-AF"/>
</dbReference>
<dbReference type="InterPro" id="IPR031444">
    <property type="entry name" value="PCNA-AF_dom"/>
</dbReference>
<dbReference type="PANTHER" id="PTHR15679">
    <property type="entry name" value="PCNA-ASSOCIATED FACTOR"/>
    <property type="match status" value="1"/>
</dbReference>
<dbReference type="PANTHER" id="PTHR15679:SF8">
    <property type="entry name" value="PCNA-ASSOCIATED FACTOR"/>
    <property type="match status" value="1"/>
</dbReference>
<dbReference type="Pfam" id="PF15715">
    <property type="entry name" value="PAF"/>
    <property type="match status" value="1"/>
</dbReference>
<organism>
    <name type="scientific">Homo sapiens</name>
    <name type="common">Human</name>
    <dbReference type="NCBI Taxonomy" id="9606"/>
    <lineage>
        <taxon>Eukaryota</taxon>
        <taxon>Metazoa</taxon>
        <taxon>Chordata</taxon>
        <taxon>Craniata</taxon>
        <taxon>Vertebrata</taxon>
        <taxon>Euteleostomi</taxon>
        <taxon>Mammalia</taxon>
        <taxon>Eutheria</taxon>
        <taxon>Euarchontoglires</taxon>
        <taxon>Primates</taxon>
        <taxon>Haplorrhini</taxon>
        <taxon>Catarrhini</taxon>
        <taxon>Hominidae</taxon>
        <taxon>Homo</taxon>
    </lineage>
</organism>
<keyword id="KW-0002">3D-structure</keyword>
<keyword id="KW-0007">Acetylation</keyword>
<keyword id="KW-0025">Alternative splicing</keyword>
<keyword id="KW-0963">Cytoplasm</keyword>
<keyword id="KW-0227">DNA damage</keyword>
<keyword id="KW-0234">DNA repair</keyword>
<keyword id="KW-1017">Isopeptide bond</keyword>
<keyword id="KW-0539">Nucleus</keyword>
<keyword id="KW-0597">Phosphoprotein</keyword>
<keyword id="KW-1267">Proteomics identification</keyword>
<keyword id="KW-1185">Reference proteome</keyword>
<keyword id="KW-0832">Ubl conjugation</keyword>
<accession>Q15004</accession>
<accession>A6NNU5</accession>
<accession>A8K3Y3</accession>
<accession>G9G694</accession>
<accession>G9G696</accession>
<evidence type="ECO:0000250" key="1"/>
<evidence type="ECO:0000250" key="2">
    <source>
        <dbReference type="UniProtKB" id="Q9CQX4"/>
    </source>
</evidence>
<evidence type="ECO:0000256" key="3">
    <source>
        <dbReference type="SAM" id="MobiDB-lite"/>
    </source>
</evidence>
<evidence type="ECO:0000269" key="4">
    <source>
    </source>
</evidence>
<evidence type="ECO:0000269" key="5">
    <source>
    </source>
</evidence>
<evidence type="ECO:0000269" key="6">
    <source>
    </source>
</evidence>
<evidence type="ECO:0000269" key="7">
    <source>
    </source>
</evidence>
<evidence type="ECO:0000269" key="8">
    <source>
    </source>
</evidence>
<evidence type="ECO:0000269" key="9">
    <source>
    </source>
</evidence>
<evidence type="ECO:0000269" key="10">
    <source>
    </source>
</evidence>
<evidence type="ECO:0000269" key="11">
    <source>
    </source>
</evidence>
<evidence type="ECO:0000269" key="12">
    <source>
    </source>
</evidence>
<evidence type="ECO:0000303" key="13">
    <source>
    </source>
</evidence>
<evidence type="ECO:0000305" key="14"/>
<evidence type="ECO:0000305" key="15">
    <source>
    </source>
</evidence>
<evidence type="ECO:0000312" key="16">
    <source>
        <dbReference type="HGNC" id="HGNC:28961"/>
    </source>
</evidence>
<evidence type="ECO:0007744" key="17">
    <source>
    </source>
</evidence>
<evidence type="ECO:0007744" key="18">
    <source>
    </source>
</evidence>
<evidence type="ECO:0007829" key="19">
    <source>
        <dbReference type="PDB" id="4D2G"/>
    </source>
</evidence>
<sequence length="111" mass="11986">MVRTKADSVPGTYRKVVAARAPRKVLGSSTSATNSTSVSSRKAENKYAGGNPVCVRPTPKWQKGIGEFFRLSPKDSEKENQIPEEAGSSGLGKAKRKACPLQPDHTNDEKE</sequence>
<reference key="1">
    <citation type="submission" date="2002-07" db="EMBL/GenBank/DDBJ databases">
        <title>Cloning and identification of human gene 9 transactivated by hepatitis C virus NS5A protein.</title>
        <authorList>
            <person name="Liu Y."/>
            <person name="Cheng J."/>
            <person name="Wang G."/>
            <person name="Wang J."/>
            <person name="Zhang L."/>
            <person name="Chen J."/>
            <person name="Li L."/>
        </authorList>
    </citation>
    <scope>NUCLEOTIDE SEQUENCE [MRNA] (ISOFORM 1)</scope>
</reference>
<reference key="2">
    <citation type="journal article" date="2004" name="Oncogene">
        <title>Suppression subtractive hybridization and expression profiling identifies a unique set of genes overexpressed in non-small-cell lung cancer.</title>
        <authorList>
            <person name="Petroziello J."/>
            <person name="Yamane A."/>
            <person name="Westendorf L."/>
            <person name="Thompson M."/>
            <person name="McDonagh C."/>
            <person name="Cerveny C."/>
            <person name="Law C.-L."/>
            <person name="Wahl A."/>
            <person name="Carter P."/>
        </authorList>
    </citation>
    <scope>NUCLEOTIDE SEQUENCE [MRNA] (ISOFORM 1)</scope>
</reference>
<reference key="3">
    <citation type="journal article" date="2011" name="PLoS ONE">
        <title>KIAA0101 is overexpressed, and promotes growth and invasion in adrenal cancer.</title>
        <authorList>
            <person name="Jain M."/>
            <person name="Zhang L."/>
            <person name="Patterson E.E."/>
            <person name="Kebebew E."/>
        </authorList>
    </citation>
    <scope>NUCLEOTIDE SEQUENCE [GENOMIC DNA]</scope>
    <scope>TISSUE SPECIFICITY</scope>
    <source>
        <tissue>Adrenal gland</tissue>
    </source>
</reference>
<reference key="4">
    <citation type="journal article" date="1995" name="DNA Res.">
        <title>Prediction of the coding sequences of unidentified human genes. III. The coding sequences of 40 new genes (KIAA0081-KIAA0120) deduced by analysis of cDNA clones from human cell line KG-1.</title>
        <authorList>
            <person name="Nagase T."/>
            <person name="Miyajima N."/>
            <person name="Tanaka A."/>
            <person name="Sazuka T."/>
            <person name="Seki N."/>
            <person name="Sato S."/>
            <person name="Tabata S."/>
            <person name="Ishikawa K."/>
            <person name="Kawarabayasi Y."/>
            <person name="Kotani H."/>
            <person name="Nomura N."/>
        </authorList>
    </citation>
    <scope>NUCLEOTIDE SEQUENCE [LARGE SCALE MRNA] (ISOFORM 1)</scope>
    <source>
        <tissue>Bone marrow</tissue>
    </source>
</reference>
<reference key="5">
    <citation type="journal article" date="2004" name="Nat. Genet.">
        <title>Complete sequencing and characterization of 21,243 full-length human cDNAs.</title>
        <authorList>
            <person name="Ota T."/>
            <person name="Suzuki Y."/>
            <person name="Nishikawa T."/>
            <person name="Otsuki T."/>
            <person name="Sugiyama T."/>
            <person name="Irie R."/>
            <person name="Wakamatsu A."/>
            <person name="Hayashi K."/>
            <person name="Sato H."/>
            <person name="Nagai K."/>
            <person name="Kimura K."/>
            <person name="Makita H."/>
            <person name="Sekine M."/>
            <person name="Obayashi M."/>
            <person name="Nishi T."/>
            <person name="Shibahara T."/>
            <person name="Tanaka T."/>
            <person name="Ishii S."/>
            <person name="Yamamoto J."/>
            <person name="Saito K."/>
            <person name="Kawai Y."/>
            <person name="Isono Y."/>
            <person name="Nakamura Y."/>
            <person name="Nagahari K."/>
            <person name="Murakami K."/>
            <person name="Yasuda T."/>
            <person name="Iwayanagi T."/>
            <person name="Wagatsuma M."/>
            <person name="Shiratori A."/>
            <person name="Sudo H."/>
            <person name="Hosoiri T."/>
            <person name="Kaku Y."/>
            <person name="Kodaira H."/>
            <person name="Kondo H."/>
            <person name="Sugawara M."/>
            <person name="Takahashi M."/>
            <person name="Kanda K."/>
            <person name="Yokoi T."/>
            <person name="Furuya T."/>
            <person name="Kikkawa E."/>
            <person name="Omura Y."/>
            <person name="Abe K."/>
            <person name="Kamihara K."/>
            <person name="Katsuta N."/>
            <person name="Sato K."/>
            <person name="Tanikawa M."/>
            <person name="Yamazaki M."/>
            <person name="Ninomiya K."/>
            <person name="Ishibashi T."/>
            <person name="Yamashita H."/>
            <person name="Murakawa K."/>
            <person name="Fujimori K."/>
            <person name="Tanai H."/>
            <person name="Kimata M."/>
            <person name="Watanabe M."/>
            <person name="Hiraoka S."/>
            <person name="Chiba Y."/>
            <person name="Ishida S."/>
            <person name="Ono Y."/>
            <person name="Takiguchi S."/>
            <person name="Watanabe S."/>
            <person name="Yosida M."/>
            <person name="Hotuta T."/>
            <person name="Kusano J."/>
            <person name="Kanehori K."/>
            <person name="Takahashi-Fujii A."/>
            <person name="Hara H."/>
            <person name="Tanase T.-O."/>
            <person name="Nomura Y."/>
            <person name="Togiya S."/>
            <person name="Komai F."/>
            <person name="Hara R."/>
            <person name="Takeuchi K."/>
            <person name="Arita M."/>
            <person name="Imose N."/>
            <person name="Musashino K."/>
            <person name="Yuuki H."/>
            <person name="Oshima A."/>
            <person name="Sasaki N."/>
            <person name="Aotsuka S."/>
            <person name="Yoshikawa Y."/>
            <person name="Matsunawa H."/>
            <person name="Ichihara T."/>
            <person name="Shiohata N."/>
            <person name="Sano S."/>
            <person name="Moriya S."/>
            <person name="Momiyama H."/>
            <person name="Satoh N."/>
            <person name="Takami S."/>
            <person name="Terashima Y."/>
            <person name="Suzuki O."/>
            <person name="Nakagawa S."/>
            <person name="Senoh A."/>
            <person name="Mizoguchi H."/>
            <person name="Goto Y."/>
            <person name="Shimizu F."/>
            <person name="Wakebe H."/>
            <person name="Hishigaki H."/>
            <person name="Watanabe T."/>
            <person name="Sugiyama A."/>
            <person name="Takemoto M."/>
            <person name="Kawakami B."/>
            <person name="Yamazaki M."/>
            <person name="Watanabe K."/>
            <person name="Kumagai A."/>
            <person name="Itakura S."/>
            <person name="Fukuzumi Y."/>
            <person name="Fujimori Y."/>
            <person name="Komiyama M."/>
            <person name="Tashiro H."/>
            <person name="Tanigami A."/>
            <person name="Fujiwara T."/>
            <person name="Ono T."/>
            <person name="Yamada K."/>
            <person name="Fujii Y."/>
            <person name="Ozaki K."/>
            <person name="Hirao M."/>
            <person name="Ohmori Y."/>
            <person name="Kawabata A."/>
            <person name="Hikiji T."/>
            <person name="Kobatake N."/>
            <person name="Inagaki H."/>
            <person name="Ikema Y."/>
            <person name="Okamoto S."/>
            <person name="Okitani R."/>
            <person name="Kawakami T."/>
            <person name="Noguchi S."/>
            <person name="Itoh T."/>
            <person name="Shigeta K."/>
            <person name="Senba T."/>
            <person name="Matsumura K."/>
            <person name="Nakajima Y."/>
            <person name="Mizuno T."/>
            <person name="Morinaga M."/>
            <person name="Sasaki M."/>
            <person name="Togashi T."/>
            <person name="Oyama M."/>
            <person name="Hata H."/>
            <person name="Watanabe M."/>
            <person name="Komatsu T."/>
            <person name="Mizushima-Sugano J."/>
            <person name="Satoh T."/>
            <person name="Shirai Y."/>
            <person name="Takahashi Y."/>
            <person name="Nakagawa K."/>
            <person name="Okumura K."/>
            <person name="Nagase T."/>
            <person name="Nomura N."/>
            <person name="Kikuchi H."/>
            <person name="Masuho Y."/>
            <person name="Yamashita R."/>
            <person name="Nakai K."/>
            <person name="Yada T."/>
            <person name="Nakamura Y."/>
            <person name="Ohara O."/>
            <person name="Isogai T."/>
            <person name="Sugano S."/>
        </authorList>
    </citation>
    <scope>NUCLEOTIDE SEQUENCE [LARGE SCALE MRNA] (ISOFORM 1)</scope>
</reference>
<reference key="6">
    <citation type="journal article" date="2006" name="Nature">
        <title>Analysis of the DNA sequence and duplication history of human chromosome 15.</title>
        <authorList>
            <person name="Zody M.C."/>
            <person name="Garber M."/>
            <person name="Sharpe T."/>
            <person name="Young S.K."/>
            <person name="Rowen L."/>
            <person name="O'Neill K."/>
            <person name="Whittaker C.A."/>
            <person name="Kamal M."/>
            <person name="Chang J.L."/>
            <person name="Cuomo C.A."/>
            <person name="Dewar K."/>
            <person name="FitzGerald M.G."/>
            <person name="Kodira C.D."/>
            <person name="Madan A."/>
            <person name="Qin S."/>
            <person name="Yang X."/>
            <person name="Abbasi N."/>
            <person name="Abouelleil A."/>
            <person name="Arachchi H.M."/>
            <person name="Baradarani L."/>
            <person name="Birditt B."/>
            <person name="Bloom S."/>
            <person name="Bloom T."/>
            <person name="Borowsky M.L."/>
            <person name="Burke J."/>
            <person name="Butler J."/>
            <person name="Cook A."/>
            <person name="DeArellano K."/>
            <person name="DeCaprio D."/>
            <person name="Dorris L. III"/>
            <person name="Dors M."/>
            <person name="Eichler E.E."/>
            <person name="Engels R."/>
            <person name="Fahey J."/>
            <person name="Fleetwood P."/>
            <person name="Friedman C."/>
            <person name="Gearin G."/>
            <person name="Hall J.L."/>
            <person name="Hensley G."/>
            <person name="Johnson E."/>
            <person name="Jones C."/>
            <person name="Kamat A."/>
            <person name="Kaur A."/>
            <person name="Locke D.P."/>
            <person name="Madan A."/>
            <person name="Munson G."/>
            <person name="Jaffe D.B."/>
            <person name="Lui A."/>
            <person name="Macdonald P."/>
            <person name="Mauceli E."/>
            <person name="Naylor J.W."/>
            <person name="Nesbitt R."/>
            <person name="Nicol R."/>
            <person name="O'Leary S.B."/>
            <person name="Ratcliffe A."/>
            <person name="Rounsley S."/>
            <person name="She X."/>
            <person name="Sneddon K.M.B."/>
            <person name="Stewart S."/>
            <person name="Sougnez C."/>
            <person name="Stone S.M."/>
            <person name="Topham K."/>
            <person name="Vincent D."/>
            <person name="Wang S."/>
            <person name="Zimmer A.R."/>
            <person name="Birren B.W."/>
            <person name="Hood L."/>
            <person name="Lander E.S."/>
            <person name="Nusbaum C."/>
        </authorList>
    </citation>
    <scope>NUCLEOTIDE SEQUENCE [LARGE SCALE GENOMIC DNA]</scope>
</reference>
<reference key="7">
    <citation type="submission" date="2005-07" db="EMBL/GenBank/DDBJ databases">
        <authorList>
            <person name="Mural R.J."/>
            <person name="Istrail S."/>
            <person name="Sutton G.G."/>
            <person name="Florea L."/>
            <person name="Halpern A.L."/>
            <person name="Mobarry C.M."/>
            <person name="Lippert R."/>
            <person name="Walenz B."/>
            <person name="Shatkay H."/>
            <person name="Dew I."/>
            <person name="Miller J.R."/>
            <person name="Flanigan M.J."/>
            <person name="Edwards N.J."/>
            <person name="Bolanos R."/>
            <person name="Fasulo D."/>
            <person name="Halldorsson B.V."/>
            <person name="Hannenhalli S."/>
            <person name="Turner R."/>
            <person name="Yooseph S."/>
            <person name="Lu F."/>
            <person name="Nusskern D.R."/>
            <person name="Shue B.C."/>
            <person name="Zheng X.H."/>
            <person name="Zhong F."/>
            <person name="Delcher A.L."/>
            <person name="Huson D.H."/>
            <person name="Kravitz S.A."/>
            <person name="Mouchard L."/>
            <person name="Reinert K."/>
            <person name="Remington K.A."/>
            <person name="Clark A.G."/>
            <person name="Waterman M.S."/>
            <person name="Eichler E.E."/>
            <person name="Adams M.D."/>
            <person name="Hunkapiller M.W."/>
            <person name="Myers E.W."/>
            <person name="Venter J.C."/>
        </authorList>
    </citation>
    <scope>NUCLEOTIDE SEQUENCE [LARGE SCALE GENOMIC DNA]</scope>
</reference>
<reference key="8">
    <citation type="journal article" date="2004" name="Genome Res.">
        <title>The status, quality, and expansion of the NIH full-length cDNA project: the Mammalian Gene Collection (MGC).</title>
        <authorList>
            <consortium name="The MGC Project Team"/>
        </authorList>
    </citation>
    <scope>NUCLEOTIDE SEQUENCE [LARGE SCALE MRNA] (ISOFORMS 1 AND 2)</scope>
    <source>
        <tissue>Bone marrow</tissue>
        <tissue>Brain</tissue>
        <tissue>Lymph</tissue>
        <tissue>Retinoblastoma</tissue>
    </source>
</reference>
<reference key="9">
    <citation type="journal article" date="2001" name="Oncogene">
        <title>p15(PAF), a novel PCNA associated factor with increased expression in tumor tissues.</title>
        <authorList>
            <person name="Yu P."/>
            <person name="Huang B."/>
            <person name="Shen M."/>
            <person name="Lau C."/>
            <person name="Chan E."/>
            <person name="Michel J."/>
            <person name="Xiong Y."/>
            <person name="Payan D.G."/>
            <person name="Luo Y."/>
        </authorList>
    </citation>
    <scope>SUBCELLULAR LOCATION</scope>
    <scope>TISSUE SPECIFICITY</scope>
    <scope>INTERACTION WITH PCNA</scope>
    <scope>MUTAGENESIS OF ILE-65 AND PHE-68</scope>
</reference>
<reference key="10">
    <citation type="journal article" date="2005" name="Cancer">
        <title>Overexpressed in anaplastic thyroid carcinoma-1 (OEATC-1) as a novel gene responsible for anaplastic thyroid carcinoma.</title>
        <authorList>
            <person name="Mizutani K."/>
            <person name="Onda M."/>
            <person name="Asaka S."/>
            <person name="Akaishi J."/>
            <person name="Miyamoto S."/>
            <person name="Yoshida A."/>
            <person name="Nagahama M."/>
            <person name="Ito K."/>
            <person name="Emi M."/>
        </authorList>
    </citation>
    <scope>TISSUE SPECIFICITY</scope>
</reference>
<reference key="11">
    <citation type="journal article" date="2006" name="Exp. Cell Res.">
        <title>The PCNA-associated factor KIAA0101/p15(PAF) binds the potential tumor suppressor product p33ING1b.</title>
        <authorList>
            <person name="Simpson F."/>
            <person name="Lammerts van Bueren K."/>
            <person name="Butterfield N."/>
            <person name="Bennetts J.S."/>
            <person name="Bowles J."/>
            <person name="Adolphe C."/>
            <person name="Simms L.A."/>
            <person name="Young J."/>
            <person name="Walsh M.D."/>
            <person name="Leggett B."/>
            <person name="Fowles L.F."/>
            <person name="Wicking C."/>
        </authorList>
    </citation>
    <scope>SUBCELLULAR LOCATION</scope>
    <scope>INTERACTION WITH ING1 AND PCNA</scope>
    <scope>INDUCTION</scope>
</reference>
<reference key="12">
    <citation type="journal article" date="2008" name="Proc. Natl. Acad. Sci. U.S.A.">
        <title>A quantitative atlas of mitotic phosphorylation.</title>
        <authorList>
            <person name="Dephoure N."/>
            <person name="Zhou C."/>
            <person name="Villen J."/>
            <person name="Beausoleil S.A."/>
            <person name="Bakalarski C.E."/>
            <person name="Elledge S.J."/>
            <person name="Gygi S.P."/>
        </authorList>
    </citation>
    <scope>IDENTIFICATION BY MASS SPECTROMETRY [LARGE SCALE ANALYSIS]</scope>
    <source>
        <tissue>Cervix carcinoma</tissue>
    </source>
</reference>
<reference key="13">
    <citation type="journal article" date="2009" name="Cell Death Differ.">
        <title>ATF3 and p15PAF are novel gatekeepers of genomic integrity upon UV stress.</title>
        <authorList>
            <person name="Turchi L."/>
            <person name="Fareh M."/>
            <person name="Aberdam E."/>
            <person name="Kitajima S."/>
            <person name="Simpson F."/>
            <person name="Wicking C."/>
            <person name="Aberdam D."/>
            <person name="Virolle T."/>
        </authorList>
    </citation>
    <scope>INTERACTION WITH PCNA</scope>
    <scope>INDUCTION</scope>
</reference>
<reference key="14">
    <citation type="journal article" date="2010" name="Sci. Signal.">
        <title>Quantitative phosphoproteomics reveals widespread full phosphorylation site occupancy during mitosis.</title>
        <authorList>
            <person name="Olsen J.V."/>
            <person name="Vermeulen M."/>
            <person name="Santamaria A."/>
            <person name="Kumar C."/>
            <person name="Miller M.L."/>
            <person name="Jensen L.J."/>
            <person name="Gnad F."/>
            <person name="Cox J."/>
            <person name="Jensen T.S."/>
            <person name="Nigg E.A."/>
            <person name="Brunak S."/>
            <person name="Mann M."/>
        </authorList>
    </citation>
    <scope>PHOSPHORYLATION [LARGE SCALE ANALYSIS] AT SER-72</scope>
    <scope>IDENTIFICATION BY MASS SPECTROMETRY [LARGE SCALE ANALYSIS]</scope>
    <source>
        <tissue>Cervix carcinoma</tissue>
    </source>
</reference>
<reference key="15">
    <citation type="journal article" date="2011" name="BMC Syst. Biol.">
        <title>Initial characterization of the human central proteome.</title>
        <authorList>
            <person name="Burkard T.R."/>
            <person name="Planyavsky M."/>
            <person name="Kaupe I."/>
            <person name="Breitwieser F.P."/>
            <person name="Buerckstuemmer T."/>
            <person name="Bennett K.L."/>
            <person name="Superti-Furga G."/>
            <person name="Colinge J."/>
        </authorList>
    </citation>
    <scope>IDENTIFICATION BY MASS SPECTROMETRY [LARGE SCALE ANALYSIS]</scope>
</reference>
<reference key="16">
    <citation type="journal article" date="2011" name="Mol. Cancer Res.">
        <title>KIAA0101 interacts with BRCA1 and regulates centrosome number.</title>
        <authorList>
            <person name="Kais Z."/>
            <person name="Barsky S.H."/>
            <person name="Mathsyaraja H."/>
            <person name="Zha A."/>
            <person name="Ransburgh D.J."/>
            <person name="He G."/>
            <person name="Pilarski R.T."/>
            <person name="Shapiro C.L."/>
            <person name="Huang K."/>
            <person name="Parvin J.D."/>
        </authorList>
    </citation>
    <scope>FUNCTION</scope>
    <scope>SUBCELLULAR LOCATION</scope>
    <scope>INTERACTION WITH BRCA1</scope>
</reference>
<reference key="17">
    <citation type="journal article" date="2011" name="Mol. Cell">
        <title>Regulation of ubiquitin chain initiation to control the timing of substrate degradation.</title>
        <authorList>
            <person name="Williamson A."/>
            <person name="Banerjee S."/>
            <person name="Zhu X."/>
            <person name="Philipp I."/>
            <person name="Iavarone A.T."/>
            <person name="Rape M."/>
        </authorList>
    </citation>
    <scope>UBIQUITINATION</scope>
    <scope>INTERACTION WITH PCNA</scope>
    <scope>MUTAGENESIS OF 93-LYS--LYS-97</scope>
</reference>
<reference key="18">
    <citation type="journal article" date="2011" name="Proc. Natl. Acad. Sci. U.S.A.">
        <title>Proliferating cell nuclear antigen (PCNA)-associated KIAA0101/PAF15 protein is a cell cycle-regulated anaphase-promoting complex/cyclosome substrate.</title>
        <authorList>
            <person name="Emanuele M.J."/>
            <person name="Ciccia A."/>
            <person name="Elia A.E."/>
            <person name="Elledge S.J."/>
        </authorList>
    </citation>
    <scope>SUBCELLULAR LOCATION</scope>
    <scope>INTERACTION WITH PCNA</scope>
    <scope>UBIQUITINATION</scope>
    <scope>PHOSPHORYLATION AT SER-31 AND SER-72</scope>
    <scope>MUTAGENESIS OF 68-PHE-PHE-69 AND LYS-78</scope>
</reference>
<reference key="19">
    <citation type="journal article" date="2012" name="Nat. Cell Biol.">
        <title>Systems-wide analysis of ubiquitylation dynamics reveals a key role for PAF15 ubiquitylation in DNA-damage bypass.</title>
        <authorList>
            <person name="Povlsen L.K."/>
            <person name="Beli P."/>
            <person name="Wagner S.A."/>
            <person name="Poulsen S.L."/>
            <person name="Sylvestersen K.B."/>
            <person name="Poulsen J.W."/>
            <person name="Nielsen M.L."/>
            <person name="Bekker-Jensen S."/>
            <person name="Mailand N."/>
            <person name="Choudhary C."/>
        </authorList>
    </citation>
    <scope>FUNCTION</scope>
    <scope>SUBCELLULAR LOCATION</scope>
    <scope>INTERACTION WITH PCNA</scope>
    <scope>UBIQUITINATION AT LYS-15 AND LYS-24</scope>
    <scope>MUTAGENESIS OF LYS-15 AND LYS-24</scope>
</reference>
<reference key="20">
    <citation type="journal article" date="2013" name="J. Proteome Res.">
        <title>Toward a comprehensive characterization of a human cancer cell phosphoproteome.</title>
        <authorList>
            <person name="Zhou H."/>
            <person name="Di Palma S."/>
            <person name="Preisinger C."/>
            <person name="Peng M."/>
            <person name="Polat A.N."/>
            <person name="Heck A.J."/>
            <person name="Mohammed S."/>
        </authorList>
    </citation>
    <scope>PHOSPHORYLATION [LARGE SCALE ANALYSIS] AT SER-8; SER-28 AND SER-72</scope>
    <scope>IDENTIFICATION BY MASS SPECTROMETRY [LARGE SCALE ANALYSIS]</scope>
    <source>
        <tissue>Cervix carcinoma</tissue>
        <tissue>Erythroleukemia</tissue>
    </source>
</reference>
<gene>
    <name evidence="16" type="primary">PCLAF</name>
    <name type="synonym">KIAA0101</name>
    <name type="synonym">NS5ATP9</name>
    <name type="synonym">PAF</name>
    <name type="ORF">L5</name>
</gene>
<feature type="chain" id="PRO_0000096684" description="PCNA-associated factor">
    <location>
        <begin position="1"/>
        <end position="111"/>
    </location>
</feature>
<feature type="region of interest" description="Disordered" evidence="3">
    <location>
        <begin position="23"/>
        <end position="111"/>
    </location>
</feature>
<feature type="short sequence motif" description="D-box">
    <location>
        <begin position="23"/>
        <end position="34"/>
    </location>
</feature>
<feature type="short sequence motif" description="PIP-box">
    <location>
        <begin position="62"/>
        <end position="72"/>
    </location>
</feature>
<feature type="short sequence motif" description="KEN box">
    <location>
        <begin position="78"/>
        <end position="80"/>
    </location>
</feature>
<feature type="short sequence motif" description="Initiation motif">
    <location>
        <begin position="85"/>
        <end position="97"/>
    </location>
</feature>
<feature type="compositionally biased region" description="Low complexity" evidence="3">
    <location>
        <begin position="28"/>
        <end position="40"/>
    </location>
</feature>
<feature type="compositionally biased region" description="Basic and acidic residues" evidence="3">
    <location>
        <begin position="72"/>
        <end position="81"/>
    </location>
</feature>
<feature type="modified residue" description="Phosphoserine" evidence="18">
    <location>
        <position position="8"/>
    </location>
</feature>
<feature type="modified residue" description="N6-acetyllysine; alternate" evidence="2">
    <location>
        <position position="24"/>
    </location>
</feature>
<feature type="modified residue" description="Phosphoserine" evidence="18">
    <location>
        <position position="28"/>
    </location>
</feature>
<feature type="modified residue" description="Phosphoserine" evidence="8">
    <location>
        <position position="31"/>
    </location>
</feature>
<feature type="modified residue" description="Phosphoserine" evidence="8 17 18">
    <location>
        <position position="72"/>
    </location>
</feature>
<feature type="cross-link" description="Glycyl lysine isopeptide (Lys-Gly) (interchain with G-Cter in ubiquitin)" evidence="12">
    <location>
        <position position="15"/>
    </location>
</feature>
<feature type="cross-link" description="Glycyl lysine isopeptide (Lys-Gly) (interchain with G-Cter in ubiquitin); alternate" evidence="12">
    <location>
        <position position="24"/>
    </location>
</feature>
<feature type="splice variant" id="VSP_045659" description="In isoform 2." evidence="13">
    <original>AENKYAGGNPVCVRPTPKWQKGIGEFFRLSPKDSEKENQIPEEAGSSGLGKAKRKACPLQPDHTNDEKE</original>
    <variation>EHVLCNLITQMMKKNRTFSFIFE</variation>
    <location>
        <begin position="43"/>
        <end position="111"/>
    </location>
</feature>
<feature type="sequence variant" id="VAR_051262" description="In dbSNP:rs11554313.">
    <original>E</original>
    <variation>K</variation>
    <location>
        <position position="79"/>
    </location>
</feature>
<feature type="mutagenesis site" description="Loss of monoubiquitination; when associated with R-24." evidence="12">
    <original>K</original>
    <variation>R</variation>
    <location>
        <position position="15"/>
    </location>
</feature>
<feature type="mutagenesis site" description="Loss of monoubiquitination; when associated with R-15." evidence="12">
    <original>K</original>
    <variation>R</variation>
    <location>
        <position position="24"/>
    </location>
</feature>
<feature type="mutagenesis site" description="Loss of binding to PCNA." evidence="4">
    <original>I</original>
    <variation>A</variation>
    <location>
        <position position="65"/>
    </location>
</feature>
<feature type="mutagenesis site" description="Loss of binding to PCNA." evidence="8">
    <original>FF</original>
    <variation>AA</variation>
    <location>
        <begin position="68"/>
        <end position="69"/>
    </location>
</feature>
<feature type="mutagenesis site" description="Loss of binding to PCNA." evidence="4">
    <original>F</original>
    <variation>A</variation>
    <location>
        <position position="68"/>
    </location>
</feature>
<feature type="mutagenesis site" description="Stabilizes the protein in G1 by preventing association with the APC/C complex and degradation by the proteasome." evidence="8">
    <original>K</original>
    <variation>A</variation>
    <location>
        <position position="78"/>
    </location>
</feature>
<feature type="mutagenesis site" description="Inhibits chain initiation by APC/C." evidence="10">
    <original>KAKRK</original>
    <variation>AAAAA</variation>
    <location>
        <begin position="93"/>
        <end position="97"/>
    </location>
</feature>
<feature type="mutagenesis site" description="No effect on chain initiation by APC/C." evidence="10">
    <original>KAKRK</original>
    <variation>RARRR</variation>
    <location>
        <begin position="93"/>
        <end position="97"/>
    </location>
</feature>
<feature type="helix" evidence="19">
    <location>
        <begin position="65"/>
        <end position="67"/>
    </location>
</feature>
<protein>
    <recommendedName>
        <fullName evidence="14">PCNA-associated factor</fullName>
    </recommendedName>
    <alternativeName>
        <fullName>Hepatitis C virus NS5A-transactivated protein 9</fullName>
        <shortName>HCV NS5A-transactivated protein 9</shortName>
    </alternativeName>
    <alternativeName>
        <fullName>Overexpressed in anaplastic thyroid carcinoma 1</fullName>
        <shortName>OEATC-1</shortName>
    </alternativeName>
    <alternativeName>
        <fullName>PCNA-associated factor of 15 kDa</fullName>
        <shortName>PAF15</shortName>
        <shortName>p15PAF</shortName>
    </alternativeName>
    <alternativeName>
        <fullName evidence="16">PCNA-clamp-associated factor</fullName>
    </alternativeName>
</protein>
<proteinExistence type="evidence at protein level"/>